<comment type="function">
    <text evidence="1">Essential cell division protein that forms a contractile ring structure (Z ring) at the future cell division site. The regulation of the ring assembly controls the timing and the location of cell division. One of the functions of the FtsZ ring is to recruit other cell division proteins to the septum to produce a new cell wall between the dividing cells. Binds GTP and shows GTPase activity.</text>
</comment>
<comment type="subunit">
    <text evidence="1">Homodimer. Polymerizes to form a dynamic ring structure in a strictly GTP-dependent manner. Interacts directly with several other division proteins.</text>
</comment>
<comment type="subcellular location">
    <subcellularLocation>
        <location evidence="1">Cytoplasm</location>
    </subcellularLocation>
    <text evidence="1">Assembles at midcell at the inner surface of the cytoplasmic membrane.</text>
</comment>
<comment type="similarity">
    <text evidence="1">Belongs to the FtsZ family.</text>
</comment>
<proteinExistence type="inferred from homology"/>
<accession>O83405</accession>
<evidence type="ECO:0000255" key="1">
    <source>
        <dbReference type="HAMAP-Rule" id="MF_00909"/>
    </source>
</evidence>
<evidence type="ECO:0000256" key="2">
    <source>
        <dbReference type="SAM" id="MobiDB-lite"/>
    </source>
</evidence>
<sequence>MMNIELAPSGEEFTLSPTVIKVIGAGGGGSNAVNRMMSCGLQCVEFIAANTDVQALSYSTAPKKLAIGTKVTRGLGAGGDPEIGEKAAMEDAEAIASALQGANMVFITAGMGGGTGTGAAPVIAKIARELGALTVAVVTKPFRFEGRAKMMLAERGIEKLRTHSDTVIVIPNQNLLSVVDKRCPIKETYLVADDLLRKSVQSISDLITLPGEVNLDFMDVKNTMEGQGYALIGVGEGEGENRAVDAATAAINNPLLEETRIEGATRLLVAVRGSENLSMGEVDGVMSVVAKTIDPDAIIIHGTSIDASMQDRVRVTVIATGVPQASISIAGDTHSSQKIKTSSYGAVSTGVYISSDEWNRAKSSKQPNLPGLATRNSAVQETRMEKNGVKGHTFGVPLPSVNEDLDEPTFLRNRNKGL</sequence>
<keyword id="KW-0131">Cell cycle</keyword>
<keyword id="KW-0132">Cell division</keyword>
<keyword id="KW-0963">Cytoplasm</keyword>
<keyword id="KW-0342">GTP-binding</keyword>
<keyword id="KW-0547">Nucleotide-binding</keyword>
<keyword id="KW-1185">Reference proteome</keyword>
<keyword id="KW-0717">Septation</keyword>
<protein>
    <recommendedName>
        <fullName evidence="1">Cell division protein FtsZ</fullName>
    </recommendedName>
</protein>
<organism>
    <name type="scientific">Treponema pallidum (strain Nichols)</name>
    <dbReference type="NCBI Taxonomy" id="243276"/>
    <lineage>
        <taxon>Bacteria</taxon>
        <taxon>Pseudomonadati</taxon>
        <taxon>Spirochaetota</taxon>
        <taxon>Spirochaetia</taxon>
        <taxon>Spirochaetales</taxon>
        <taxon>Treponemataceae</taxon>
        <taxon>Treponema</taxon>
    </lineage>
</organism>
<reference key="1">
    <citation type="journal article" date="1998" name="Science">
        <title>Complete genome sequence of Treponema pallidum, the syphilis spirochete.</title>
        <authorList>
            <person name="Fraser C.M."/>
            <person name="Norris S.J."/>
            <person name="Weinstock G.M."/>
            <person name="White O."/>
            <person name="Sutton G.G."/>
            <person name="Dodson R.J."/>
            <person name="Gwinn M.L."/>
            <person name="Hickey E.K."/>
            <person name="Clayton R.A."/>
            <person name="Ketchum K.A."/>
            <person name="Sodergren E."/>
            <person name="Hardham J.M."/>
            <person name="McLeod M.P."/>
            <person name="Salzberg S.L."/>
            <person name="Peterson J.D."/>
            <person name="Khalak H.G."/>
            <person name="Richardson D.L."/>
            <person name="Howell J.K."/>
            <person name="Chidambaram M."/>
            <person name="Utterback T.R."/>
            <person name="McDonald L.A."/>
            <person name="Artiach P."/>
            <person name="Bowman C."/>
            <person name="Cotton M.D."/>
            <person name="Fujii C."/>
            <person name="Garland S.A."/>
            <person name="Hatch B."/>
            <person name="Horst K."/>
            <person name="Roberts K.M."/>
            <person name="Sandusky M."/>
            <person name="Weidman J.F."/>
            <person name="Smith H.O."/>
            <person name="Venter J.C."/>
        </authorList>
    </citation>
    <scope>NUCLEOTIDE SEQUENCE [LARGE SCALE GENOMIC DNA]</scope>
    <source>
        <strain>Nichols</strain>
    </source>
</reference>
<feature type="chain" id="PRO_0000114392" description="Cell division protein FtsZ">
    <location>
        <begin position="1"/>
        <end position="418"/>
    </location>
</feature>
<feature type="region of interest" description="Disordered" evidence="2">
    <location>
        <begin position="386"/>
        <end position="418"/>
    </location>
</feature>
<feature type="binding site" evidence="1">
    <location>
        <begin position="27"/>
        <end position="31"/>
    </location>
    <ligand>
        <name>GTP</name>
        <dbReference type="ChEBI" id="CHEBI:37565"/>
    </ligand>
</feature>
<feature type="binding site" evidence="1">
    <location>
        <begin position="114"/>
        <end position="116"/>
    </location>
    <ligand>
        <name>GTP</name>
        <dbReference type="ChEBI" id="CHEBI:37565"/>
    </ligand>
</feature>
<feature type="binding site" evidence="1">
    <location>
        <position position="145"/>
    </location>
    <ligand>
        <name>GTP</name>
        <dbReference type="ChEBI" id="CHEBI:37565"/>
    </ligand>
</feature>
<feature type="binding site" evidence="1">
    <location>
        <position position="149"/>
    </location>
    <ligand>
        <name>GTP</name>
        <dbReference type="ChEBI" id="CHEBI:37565"/>
    </ligand>
</feature>
<feature type="binding site" evidence="1">
    <location>
        <position position="193"/>
    </location>
    <ligand>
        <name>GTP</name>
        <dbReference type="ChEBI" id="CHEBI:37565"/>
    </ligand>
</feature>
<gene>
    <name evidence="1" type="primary">ftsZ</name>
    <name type="ordered locus">TP_0390</name>
</gene>
<name>FTSZ_TREPA</name>
<dbReference type="EMBL" id="AE000520">
    <property type="protein sequence ID" value="AAC65374.1"/>
    <property type="molecule type" value="Genomic_DNA"/>
</dbReference>
<dbReference type="PIR" id="H71331">
    <property type="entry name" value="H71331"/>
</dbReference>
<dbReference type="RefSeq" id="WP_010881838.1">
    <property type="nucleotide sequence ID" value="NC_021490.2"/>
</dbReference>
<dbReference type="SMR" id="O83405"/>
<dbReference type="IntAct" id="O83405">
    <property type="interactions" value="6"/>
</dbReference>
<dbReference type="STRING" id="243276.TP_0390"/>
<dbReference type="EnsemblBacteria" id="AAC65374">
    <property type="protein sequence ID" value="AAC65374"/>
    <property type="gene ID" value="TP_0390"/>
</dbReference>
<dbReference type="GeneID" id="93876164"/>
<dbReference type="KEGG" id="tpa:TP_0390"/>
<dbReference type="KEGG" id="tpw:TPANIC_0390"/>
<dbReference type="eggNOG" id="COG0206">
    <property type="taxonomic scope" value="Bacteria"/>
</dbReference>
<dbReference type="HOGENOM" id="CLU_024865_0_1_12"/>
<dbReference type="OrthoDB" id="9813375at2"/>
<dbReference type="Proteomes" id="UP000000811">
    <property type="component" value="Chromosome"/>
</dbReference>
<dbReference type="GO" id="GO:0032153">
    <property type="term" value="C:cell division site"/>
    <property type="evidence" value="ECO:0007669"/>
    <property type="project" value="UniProtKB-UniRule"/>
</dbReference>
<dbReference type="GO" id="GO:0005737">
    <property type="term" value="C:cytoplasm"/>
    <property type="evidence" value="ECO:0007669"/>
    <property type="project" value="UniProtKB-SubCell"/>
</dbReference>
<dbReference type="GO" id="GO:0005525">
    <property type="term" value="F:GTP binding"/>
    <property type="evidence" value="ECO:0007669"/>
    <property type="project" value="UniProtKB-UniRule"/>
</dbReference>
<dbReference type="GO" id="GO:0003924">
    <property type="term" value="F:GTPase activity"/>
    <property type="evidence" value="ECO:0007669"/>
    <property type="project" value="UniProtKB-UniRule"/>
</dbReference>
<dbReference type="GO" id="GO:0000917">
    <property type="term" value="P:division septum assembly"/>
    <property type="evidence" value="ECO:0007669"/>
    <property type="project" value="UniProtKB-KW"/>
</dbReference>
<dbReference type="GO" id="GO:0043093">
    <property type="term" value="P:FtsZ-dependent cytokinesis"/>
    <property type="evidence" value="ECO:0007669"/>
    <property type="project" value="UniProtKB-UniRule"/>
</dbReference>
<dbReference type="GO" id="GO:0051258">
    <property type="term" value="P:protein polymerization"/>
    <property type="evidence" value="ECO:0007669"/>
    <property type="project" value="UniProtKB-UniRule"/>
</dbReference>
<dbReference type="CDD" id="cd02201">
    <property type="entry name" value="FtsZ_type1"/>
    <property type="match status" value="1"/>
</dbReference>
<dbReference type="FunFam" id="3.40.50.1440:FF:000001">
    <property type="entry name" value="Cell division protein FtsZ"/>
    <property type="match status" value="1"/>
</dbReference>
<dbReference type="Gene3D" id="3.40.50.1440">
    <property type="entry name" value="Tubulin/FtsZ, GTPase domain"/>
    <property type="match status" value="1"/>
</dbReference>
<dbReference type="HAMAP" id="MF_00909">
    <property type="entry name" value="FtsZ"/>
    <property type="match status" value="1"/>
</dbReference>
<dbReference type="InterPro" id="IPR000158">
    <property type="entry name" value="Cell_div_FtsZ"/>
</dbReference>
<dbReference type="InterPro" id="IPR020805">
    <property type="entry name" value="Cell_div_FtsZ_CS"/>
</dbReference>
<dbReference type="InterPro" id="IPR045061">
    <property type="entry name" value="FtsZ/CetZ"/>
</dbReference>
<dbReference type="InterPro" id="IPR024757">
    <property type="entry name" value="FtsZ_C"/>
</dbReference>
<dbReference type="InterPro" id="IPR008280">
    <property type="entry name" value="Tub_FtsZ_C"/>
</dbReference>
<dbReference type="InterPro" id="IPR018316">
    <property type="entry name" value="Tubulin/FtsZ_2-layer-sand-dom"/>
</dbReference>
<dbReference type="InterPro" id="IPR036525">
    <property type="entry name" value="Tubulin/FtsZ_GTPase_sf"/>
</dbReference>
<dbReference type="InterPro" id="IPR003008">
    <property type="entry name" value="Tubulin_FtsZ_GTPase"/>
</dbReference>
<dbReference type="NCBIfam" id="TIGR00065">
    <property type="entry name" value="ftsZ"/>
    <property type="match status" value="1"/>
</dbReference>
<dbReference type="PANTHER" id="PTHR30314">
    <property type="entry name" value="CELL DIVISION PROTEIN FTSZ-RELATED"/>
    <property type="match status" value="1"/>
</dbReference>
<dbReference type="PANTHER" id="PTHR30314:SF3">
    <property type="entry name" value="MITOCHONDRIAL DIVISION PROTEIN FSZA"/>
    <property type="match status" value="1"/>
</dbReference>
<dbReference type="Pfam" id="PF12327">
    <property type="entry name" value="FtsZ_C"/>
    <property type="match status" value="1"/>
</dbReference>
<dbReference type="Pfam" id="PF00091">
    <property type="entry name" value="Tubulin"/>
    <property type="match status" value="1"/>
</dbReference>
<dbReference type="PRINTS" id="PR00423">
    <property type="entry name" value="CELLDVISFTSZ"/>
</dbReference>
<dbReference type="SMART" id="SM00864">
    <property type="entry name" value="Tubulin"/>
    <property type="match status" value="1"/>
</dbReference>
<dbReference type="SMART" id="SM00865">
    <property type="entry name" value="Tubulin_C"/>
    <property type="match status" value="1"/>
</dbReference>
<dbReference type="SUPFAM" id="SSF55307">
    <property type="entry name" value="Tubulin C-terminal domain-like"/>
    <property type="match status" value="1"/>
</dbReference>
<dbReference type="SUPFAM" id="SSF52490">
    <property type="entry name" value="Tubulin nucleotide-binding domain-like"/>
    <property type="match status" value="1"/>
</dbReference>
<dbReference type="PROSITE" id="PS01134">
    <property type="entry name" value="FTSZ_1"/>
    <property type="match status" value="1"/>
</dbReference>
<dbReference type="PROSITE" id="PS01135">
    <property type="entry name" value="FTSZ_2"/>
    <property type="match status" value="1"/>
</dbReference>